<gene>
    <name type="primary">HAPLN3</name>
    <name type="synonym">EXLD1</name>
    <name type="ORF">UNQ238/PRO271</name>
</gene>
<evidence type="ECO:0000250" key="1"/>
<evidence type="ECO:0000250" key="2">
    <source>
        <dbReference type="UniProtKB" id="P03994"/>
    </source>
</evidence>
<evidence type="ECO:0000255" key="3"/>
<evidence type="ECO:0000255" key="4">
    <source>
        <dbReference type="PROSITE-ProRule" id="PRU00323"/>
    </source>
</evidence>
<evidence type="ECO:0000269" key="5">
    <source>
    </source>
</evidence>
<evidence type="ECO:0000303" key="6">
    <source>
    </source>
</evidence>
<evidence type="ECO:0000305" key="7"/>
<evidence type="ECO:0000312" key="8">
    <source>
        <dbReference type="EMBL" id="AAH62320.1"/>
    </source>
</evidence>
<evidence type="ECO:0000312" key="9">
    <source>
        <dbReference type="EMBL" id="AAK67639.1"/>
    </source>
</evidence>
<sequence>MGLLLLVPLLLLPGSYGLPFYNGFYYSNSANDQNLGNGHGKDLLNGVKLVVETPEETLFTYQGASVILPCRYRYEPALVSPRRVRVKWWKLSENGAPEKDVLVAIGLRHRSFGDYQGRVHLRQDKEHDVSLEIQDLRLEDYGRYRCEVIDGLEDESGLVELELRGVVFPYQSPNGRYQFNFHEGQQVCAEQAAVVASFEQLFRAWEEGLDWCNAGWLQDATVQYPIMLPRQPCGGPGLAPGVRSYGPRHRRLHRYDVFCFATALKGRVYYLEHPEKLTLTEAREACQEDDATIAKVGQLFAAWKFHGLDRCDAGWLADGSVRYPVVHPHPNCGPPEPGVRSFGFPDPQSRLYGVYCYRQH</sequence>
<protein>
    <recommendedName>
        <fullName>Hyaluronan and proteoglycan link protein 3</fullName>
    </recommendedName>
</protein>
<reference evidence="7" key="1">
    <citation type="journal article" date="2003" name="J. Biol. Chem.">
        <title>A hyaluronan binding link protein gene family whose members are physically linked adjacent to chondroitin sulfate proteoglycan core protein genes: the missing links.</title>
        <authorList>
            <person name="Spicer A.P."/>
            <person name="Joo A."/>
            <person name="Bowling R.A. Jr."/>
        </authorList>
    </citation>
    <scope>NUCLEOTIDE SEQUENCE [MRNA]</scope>
    <scope>TISSUE SPECIFICITY</scope>
</reference>
<reference evidence="9" key="2">
    <citation type="submission" date="2001-05" db="EMBL/GenBank/DDBJ databases">
        <authorList>
            <person name="Li N."/>
            <person name="Zhang W."/>
            <person name="Wan T."/>
            <person name="Zhang M."/>
            <person name="Cao X."/>
        </authorList>
    </citation>
    <scope>NUCLEOTIDE SEQUENCE [MRNA]</scope>
</reference>
<reference evidence="7" key="3">
    <citation type="journal article" date="2003" name="Genome Res.">
        <title>The secreted protein discovery initiative (SPDI), a large-scale effort to identify novel human secreted and transmembrane proteins: a bioinformatics assessment.</title>
        <authorList>
            <person name="Clark H.F."/>
            <person name="Gurney A.L."/>
            <person name="Abaya E."/>
            <person name="Baker K."/>
            <person name="Baldwin D.T."/>
            <person name="Brush J."/>
            <person name="Chen J."/>
            <person name="Chow B."/>
            <person name="Chui C."/>
            <person name="Crowley C."/>
            <person name="Currell B."/>
            <person name="Deuel B."/>
            <person name="Dowd P."/>
            <person name="Eaton D."/>
            <person name="Foster J.S."/>
            <person name="Grimaldi C."/>
            <person name="Gu Q."/>
            <person name="Hass P.E."/>
            <person name="Heldens S."/>
            <person name="Huang A."/>
            <person name="Kim H.S."/>
            <person name="Klimowski L."/>
            <person name="Jin Y."/>
            <person name="Johnson S."/>
            <person name="Lee J."/>
            <person name="Lewis L."/>
            <person name="Liao D."/>
            <person name="Mark M.R."/>
            <person name="Robbie E."/>
            <person name="Sanchez C."/>
            <person name="Schoenfeld J."/>
            <person name="Seshagiri S."/>
            <person name="Simmons L."/>
            <person name="Singh J."/>
            <person name="Smith V."/>
            <person name="Stinson J."/>
            <person name="Vagts A."/>
            <person name="Vandlen R.L."/>
            <person name="Watanabe C."/>
            <person name="Wieand D."/>
            <person name="Woods K."/>
            <person name="Xie M.-H."/>
            <person name="Yansura D.G."/>
            <person name="Yi S."/>
            <person name="Yu G."/>
            <person name="Yuan J."/>
            <person name="Zhang M."/>
            <person name="Zhang Z."/>
            <person name="Goddard A.D."/>
            <person name="Wood W.I."/>
            <person name="Godowski P.J."/>
            <person name="Gray A.M."/>
        </authorList>
    </citation>
    <scope>NUCLEOTIDE SEQUENCE [LARGE SCALE MRNA]</scope>
</reference>
<reference key="4">
    <citation type="journal article" date="2004" name="Nat. Genet.">
        <title>Complete sequencing and characterization of 21,243 full-length human cDNAs.</title>
        <authorList>
            <person name="Ota T."/>
            <person name="Suzuki Y."/>
            <person name="Nishikawa T."/>
            <person name="Otsuki T."/>
            <person name="Sugiyama T."/>
            <person name="Irie R."/>
            <person name="Wakamatsu A."/>
            <person name="Hayashi K."/>
            <person name="Sato H."/>
            <person name="Nagai K."/>
            <person name="Kimura K."/>
            <person name="Makita H."/>
            <person name="Sekine M."/>
            <person name="Obayashi M."/>
            <person name="Nishi T."/>
            <person name="Shibahara T."/>
            <person name="Tanaka T."/>
            <person name="Ishii S."/>
            <person name="Yamamoto J."/>
            <person name="Saito K."/>
            <person name="Kawai Y."/>
            <person name="Isono Y."/>
            <person name="Nakamura Y."/>
            <person name="Nagahari K."/>
            <person name="Murakami K."/>
            <person name="Yasuda T."/>
            <person name="Iwayanagi T."/>
            <person name="Wagatsuma M."/>
            <person name="Shiratori A."/>
            <person name="Sudo H."/>
            <person name="Hosoiri T."/>
            <person name="Kaku Y."/>
            <person name="Kodaira H."/>
            <person name="Kondo H."/>
            <person name="Sugawara M."/>
            <person name="Takahashi M."/>
            <person name="Kanda K."/>
            <person name="Yokoi T."/>
            <person name="Furuya T."/>
            <person name="Kikkawa E."/>
            <person name="Omura Y."/>
            <person name="Abe K."/>
            <person name="Kamihara K."/>
            <person name="Katsuta N."/>
            <person name="Sato K."/>
            <person name="Tanikawa M."/>
            <person name="Yamazaki M."/>
            <person name="Ninomiya K."/>
            <person name="Ishibashi T."/>
            <person name="Yamashita H."/>
            <person name="Murakawa K."/>
            <person name="Fujimori K."/>
            <person name="Tanai H."/>
            <person name="Kimata M."/>
            <person name="Watanabe M."/>
            <person name="Hiraoka S."/>
            <person name="Chiba Y."/>
            <person name="Ishida S."/>
            <person name="Ono Y."/>
            <person name="Takiguchi S."/>
            <person name="Watanabe S."/>
            <person name="Yosida M."/>
            <person name="Hotuta T."/>
            <person name="Kusano J."/>
            <person name="Kanehori K."/>
            <person name="Takahashi-Fujii A."/>
            <person name="Hara H."/>
            <person name="Tanase T.-O."/>
            <person name="Nomura Y."/>
            <person name="Togiya S."/>
            <person name="Komai F."/>
            <person name="Hara R."/>
            <person name="Takeuchi K."/>
            <person name="Arita M."/>
            <person name="Imose N."/>
            <person name="Musashino K."/>
            <person name="Yuuki H."/>
            <person name="Oshima A."/>
            <person name="Sasaki N."/>
            <person name="Aotsuka S."/>
            <person name="Yoshikawa Y."/>
            <person name="Matsunawa H."/>
            <person name="Ichihara T."/>
            <person name="Shiohata N."/>
            <person name="Sano S."/>
            <person name="Moriya S."/>
            <person name="Momiyama H."/>
            <person name="Satoh N."/>
            <person name="Takami S."/>
            <person name="Terashima Y."/>
            <person name="Suzuki O."/>
            <person name="Nakagawa S."/>
            <person name="Senoh A."/>
            <person name="Mizoguchi H."/>
            <person name="Goto Y."/>
            <person name="Shimizu F."/>
            <person name="Wakebe H."/>
            <person name="Hishigaki H."/>
            <person name="Watanabe T."/>
            <person name="Sugiyama A."/>
            <person name="Takemoto M."/>
            <person name="Kawakami B."/>
            <person name="Yamazaki M."/>
            <person name="Watanabe K."/>
            <person name="Kumagai A."/>
            <person name="Itakura S."/>
            <person name="Fukuzumi Y."/>
            <person name="Fujimori Y."/>
            <person name="Komiyama M."/>
            <person name="Tashiro H."/>
            <person name="Tanigami A."/>
            <person name="Fujiwara T."/>
            <person name="Ono T."/>
            <person name="Yamada K."/>
            <person name="Fujii Y."/>
            <person name="Ozaki K."/>
            <person name="Hirao M."/>
            <person name="Ohmori Y."/>
            <person name="Kawabata A."/>
            <person name="Hikiji T."/>
            <person name="Kobatake N."/>
            <person name="Inagaki H."/>
            <person name="Ikema Y."/>
            <person name="Okamoto S."/>
            <person name="Okitani R."/>
            <person name="Kawakami T."/>
            <person name="Noguchi S."/>
            <person name="Itoh T."/>
            <person name="Shigeta K."/>
            <person name="Senba T."/>
            <person name="Matsumura K."/>
            <person name="Nakajima Y."/>
            <person name="Mizuno T."/>
            <person name="Morinaga M."/>
            <person name="Sasaki M."/>
            <person name="Togashi T."/>
            <person name="Oyama M."/>
            <person name="Hata H."/>
            <person name="Watanabe M."/>
            <person name="Komatsu T."/>
            <person name="Mizushima-Sugano J."/>
            <person name="Satoh T."/>
            <person name="Shirai Y."/>
            <person name="Takahashi Y."/>
            <person name="Nakagawa K."/>
            <person name="Okumura K."/>
            <person name="Nagase T."/>
            <person name="Nomura N."/>
            <person name="Kikuchi H."/>
            <person name="Masuho Y."/>
            <person name="Yamashita R."/>
            <person name="Nakai K."/>
            <person name="Yada T."/>
            <person name="Nakamura Y."/>
            <person name="Ohara O."/>
            <person name="Isogai T."/>
            <person name="Sugano S."/>
        </authorList>
    </citation>
    <scope>NUCLEOTIDE SEQUENCE [LARGE SCALE MRNA]</scope>
    <source>
        <tissue>Spleen</tissue>
    </source>
</reference>
<reference evidence="9" key="5">
    <citation type="submission" date="2005-07" db="EMBL/GenBank/DDBJ databases">
        <authorList>
            <person name="Mural R.J."/>
            <person name="Istrail S."/>
            <person name="Sutton G.G."/>
            <person name="Florea L."/>
            <person name="Halpern A.L."/>
            <person name="Mobarry C.M."/>
            <person name="Lippert R."/>
            <person name="Walenz B."/>
            <person name="Shatkay H."/>
            <person name="Dew I."/>
            <person name="Miller J.R."/>
            <person name="Flanigan M.J."/>
            <person name="Edwards N.J."/>
            <person name="Bolanos R."/>
            <person name="Fasulo D."/>
            <person name="Halldorsson B.V."/>
            <person name="Hannenhalli S."/>
            <person name="Turner R."/>
            <person name="Yooseph S."/>
            <person name="Lu F."/>
            <person name="Nusskern D.R."/>
            <person name="Shue B.C."/>
            <person name="Zheng X.H."/>
            <person name="Zhong F."/>
            <person name="Delcher A.L."/>
            <person name="Huson D.H."/>
            <person name="Kravitz S.A."/>
            <person name="Mouchard L."/>
            <person name="Reinert K."/>
            <person name="Remington K.A."/>
            <person name="Clark A.G."/>
            <person name="Waterman M.S."/>
            <person name="Eichler E.E."/>
            <person name="Adams M.D."/>
            <person name="Hunkapiller M.W."/>
            <person name="Myers E.W."/>
            <person name="Venter J.C."/>
        </authorList>
    </citation>
    <scope>NUCLEOTIDE SEQUENCE [LARGE SCALE GENOMIC DNA]</scope>
</reference>
<reference evidence="7" key="6">
    <citation type="journal article" date="2004" name="Genome Res.">
        <title>The status, quality, and expansion of the NIH full-length cDNA project: the Mammalian Gene Collection (MGC).</title>
        <authorList>
            <consortium name="The MGC Project Team"/>
        </authorList>
    </citation>
    <scope>NUCLEOTIDE SEQUENCE [LARGE SCALE MRNA]</scope>
    <source>
        <tissue evidence="8">Pancreas</tissue>
    </source>
</reference>
<feature type="signal peptide" evidence="3">
    <location>
        <begin position="1"/>
        <end position="17"/>
    </location>
</feature>
<feature type="chain" id="PRO_0000013190" description="Hyaluronan and proteoglycan link protein 3" evidence="3">
    <location>
        <begin position="18"/>
        <end position="360"/>
    </location>
</feature>
<feature type="domain" description="Ig-like V-type" evidence="7">
    <location>
        <begin position="48"/>
        <end position="164"/>
    </location>
</feature>
<feature type="domain" description="Link 1" evidence="4 7">
    <location>
        <begin position="166"/>
        <end position="261"/>
    </location>
</feature>
<feature type="domain" description="Link 2" evidence="4 7">
    <location>
        <begin position="266"/>
        <end position="358"/>
    </location>
</feature>
<feature type="disulfide bond" evidence="2">
    <location>
        <begin position="70"/>
        <end position="146"/>
    </location>
</feature>
<feature type="disulfide bond" evidence="2">
    <location>
        <begin position="188"/>
        <end position="259"/>
    </location>
</feature>
<feature type="disulfide bond" evidence="2">
    <location>
        <begin position="212"/>
        <end position="233"/>
    </location>
</feature>
<feature type="disulfide bond" evidence="2">
    <location>
        <begin position="286"/>
        <end position="356"/>
    </location>
</feature>
<feature type="disulfide bond" evidence="2">
    <location>
        <begin position="311"/>
        <end position="332"/>
    </location>
</feature>
<accession>Q96S86</accession>
<accession>A8K7P0</accession>
<name>HPLN3_HUMAN</name>
<proteinExistence type="evidence at protein level"/>
<keyword id="KW-1015">Disulfide bond</keyword>
<keyword id="KW-0272">Extracellular matrix</keyword>
<keyword id="KW-0373">Hyaluronic acid</keyword>
<keyword id="KW-0393">Immunoglobulin domain</keyword>
<keyword id="KW-1267">Proteomics identification</keyword>
<keyword id="KW-1185">Reference proteome</keyword>
<keyword id="KW-0677">Repeat</keyword>
<keyword id="KW-0964">Secreted</keyword>
<keyword id="KW-0732">Signal</keyword>
<comment type="function">
    <text evidence="6">May function in hyaluronic acid binding.</text>
</comment>
<comment type="subcellular location">
    <subcellularLocation>
        <location evidence="1">Secreted</location>
        <location evidence="1">Extracellular space</location>
        <location evidence="1">Extracellular matrix</location>
    </subcellularLocation>
</comment>
<comment type="tissue specificity">
    <text evidence="5">Widely expressed with highest levels in spleen and placenta.</text>
</comment>
<comment type="similarity">
    <text evidence="7">Belongs to the HAPLN family.</text>
</comment>
<dbReference type="EMBL" id="AY262759">
    <property type="protein sequence ID" value="AAP22051.1"/>
    <property type="molecule type" value="mRNA"/>
</dbReference>
<dbReference type="EMBL" id="AY037161">
    <property type="protein sequence ID" value="AAK67639.1"/>
    <property type="molecule type" value="mRNA"/>
</dbReference>
<dbReference type="EMBL" id="AY358500">
    <property type="protein sequence ID" value="AAQ88864.1"/>
    <property type="molecule type" value="mRNA"/>
</dbReference>
<dbReference type="EMBL" id="AK292055">
    <property type="protein sequence ID" value="BAF84744.1"/>
    <property type="molecule type" value="mRNA"/>
</dbReference>
<dbReference type="EMBL" id="CH471101">
    <property type="protein sequence ID" value="EAX02022.1"/>
    <property type="molecule type" value="Genomic_DNA"/>
</dbReference>
<dbReference type="EMBL" id="BC062320">
    <property type="protein sequence ID" value="AAH62320.1"/>
    <property type="molecule type" value="mRNA"/>
</dbReference>
<dbReference type="CCDS" id="CCDS10346.1"/>
<dbReference type="RefSeq" id="NP_001294881.1">
    <property type="nucleotide sequence ID" value="NM_001307952.1"/>
</dbReference>
<dbReference type="RefSeq" id="NP_839946.1">
    <property type="nucleotide sequence ID" value="NM_178232.4"/>
</dbReference>
<dbReference type="RefSeq" id="XP_047288128.1">
    <property type="nucleotide sequence ID" value="XM_047432172.1"/>
</dbReference>
<dbReference type="RefSeq" id="XP_054233308.1">
    <property type="nucleotide sequence ID" value="XM_054377333.1"/>
</dbReference>
<dbReference type="SMR" id="Q96S86"/>
<dbReference type="BioGRID" id="126950">
    <property type="interactions" value="56"/>
</dbReference>
<dbReference type="FunCoup" id="Q96S86">
    <property type="interactions" value="334"/>
</dbReference>
<dbReference type="IntAct" id="Q96S86">
    <property type="interactions" value="38"/>
</dbReference>
<dbReference type="STRING" id="9606.ENSP00000457180"/>
<dbReference type="DrugBank" id="DB08818">
    <property type="generic name" value="Hyaluronic acid"/>
</dbReference>
<dbReference type="iPTMnet" id="Q96S86"/>
<dbReference type="PhosphoSitePlus" id="Q96S86"/>
<dbReference type="BioMuta" id="HAPLN3"/>
<dbReference type="DMDM" id="47605734"/>
<dbReference type="MassIVE" id="Q96S86"/>
<dbReference type="PaxDb" id="9606-ENSP00000352606"/>
<dbReference type="PeptideAtlas" id="Q96S86"/>
<dbReference type="ProteomicsDB" id="78084"/>
<dbReference type="Antibodypedia" id="28522">
    <property type="antibodies" value="110 antibodies from 21 providers"/>
</dbReference>
<dbReference type="DNASU" id="145864"/>
<dbReference type="Ensembl" id="ENST00000359595.8">
    <property type="protein sequence ID" value="ENSP00000352606.4"/>
    <property type="gene ID" value="ENSG00000140511.12"/>
</dbReference>
<dbReference type="GeneID" id="145864"/>
<dbReference type="KEGG" id="hsa:145864"/>
<dbReference type="MANE-Select" id="ENST00000359595.8">
    <property type="protein sequence ID" value="ENSP00000352606.4"/>
    <property type="RefSeq nucleotide sequence ID" value="NM_178232.4"/>
    <property type="RefSeq protein sequence ID" value="NP_839946.1"/>
</dbReference>
<dbReference type="UCSC" id="uc002bnc.4">
    <property type="organism name" value="human"/>
</dbReference>
<dbReference type="AGR" id="HGNC:21446"/>
<dbReference type="CTD" id="145864"/>
<dbReference type="DisGeNET" id="145864"/>
<dbReference type="GeneCards" id="HAPLN3"/>
<dbReference type="HGNC" id="HGNC:21446">
    <property type="gene designation" value="HAPLN3"/>
</dbReference>
<dbReference type="HPA" id="ENSG00000140511">
    <property type="expression patterns" value="Low tissue specificity"/>
</dbReference>
<dbReference type="neXtProt" id="NX_Q96S86"/>
<dbReference type="OpenTargets" id="ENSG00000140511"/>
<dbReference type="PharmGKB" id="PA134919215"/>
<dbReference type="VEuPathDB" id="HostDB:ENSG00000140511"/>
<dbReference type="eggNOG" id="ENOG502QWFF">
    <property type="taxonomic scope" value="Eukaryota"/>
</dbReference>
<dbReference type="GeneTree" id="ENSGT00940000159628"/>
<dbReference type="HOGENOM" id="CLU_052285_1_0_1"/>
<dbReference type="InParanoid" id="Q96S86"/>
<dbReference type="OrthoDB" id="6431884at2759"/>
<dbReference type="PAN-GO" id="Q96S86">
    <property type="GO annotations" value="3 GO annotations based on evolutionary models"/>
</dbReference>
<dbReference type="PhylomeDB" id="Q96S86"/>
<dbReference type="TreeFam" id="TF332134"/>
<dbReference type="PathwayCommons" id="Q96S86"/>
<dbReference type="SignaLink" id="Q96S86"/>
<dbReference type="BioGRID-ORCS" id="145864">
    <property type="hits" value="11 hits in 1159 CRISPR screens"/>
</dbReference>
<dbReference type="ChiTaRS" id="HAPLN3">
    <property type="organism name" value="human"/>
</dbReference>
<dbReference type="GenomeRNAi" id="145864"/>
<dbReference type="Pharos" id="Q96S86">
    <property type="development level" value="Tbio"/>
</dbReference>
<dbReference type="PRO" id="PR:Q96S86"/>
<dbReference type="Proteomes" id="UP000005640">
    <property type="component" value="Chromosome 15"/>
</dbReference>
<dbReference type="RNAct" id="Q96S86">
    <property type="molecule type" value="protein"/>
</dbReference>
<dbReference type="Bgee" id="ENSG00000140511">
    <property type="expression patterns" value="Expressed in descending thoracic aorta and 128 other cell types or tissues"/>
</dbReference>
<dbReference type="ExpressionAtlas" id="Q96S86">
    <property type="expression patterns" value="baseline and differential"/>
</dbReference>
<dbReference type="GO" id="GO:0005615">
    <property type="term" value="C:extracellular space"/>
    <property type="evidence" value="ECO:0007005"/>
    <property type="project" value="UniProtKB"/>
</dbReference>
<dbReference type="GO" id="GO:0072534">
    <property type="term" value="C:perineuronal net"/>
    <property type="evidence" value="ECO:0000318"/>
    <property type="project" value="GO_Central"/>
</dbReference>
<dbReference type="GO" id="GO:0045202">
    <property type="term" value="C:synapse"/>
    <property type="evidence" value="ECO:0000318"/>
    <property type="project" value="GO_Central"/>
</dbReference>
<dbReference type="GO" id="GO:0005540">
    <property type="term" value="F:hyaluronic acid binding"/>
    <property type="evidence" value="ECO:0007669"/>
    <property type="project" value="UniProtKB-KW"/>
</dbReference>
<dbReference type="GO" id="GO:0007155">
    <property type="term" value="P:cell adhesion"/>
    <property type="evidence" value="ECO:0007669"/>
    <property type="project" value="InterPro"/>
</dbReference>
<dbReference type="GO" id="GO:0007417">
    <property type="term" value="P:central nervous system development"/>
    <property type="evidence" value="ECO:0000318"/>
    <property type="project" value="GO_Central"/>
</dbReference>
<dbReference type="GO" id="GO:0001501">
    <property type="term" value="P:skeletal system development"/>
    <property type="evidence" value="ECO:0000318"/>
    <property type="project" value="GO_Central"/>
</dbReference>
<dbReference type="CDD" id="cd05877">
    <property type="entry name" value="Ig_LP_like"/>
    <property type="match status" value="1"/>
</dbReference>
<dbReference type="CDD" id="cd03518">
    <property type="entry name" value="Link_domain_HAPLN_module_1"/>
    <property type="match status" value="1"/>
</dbReference>
<dbReference type="CDD" id="cd03519">
    <property type="entry name" value="Link_domain_HAPLN_module_2"/>
    <property type="match status" value="1"/>
</dbReference>
<dbReference type="FunFam" id="2.60.40.10:FF:000845">
    <property type="entry name" value="Hyaluronan and proteoglycan link protein 3"/>
    <property type="match status" value="1"/>
</dbReference>
<dbReference type="FunFam" id="3.10.100.10:FF:000001">
    <property type="entry name" value="Hyaluronan proteoglycan link protein 1"/>
    <property type="match status" value="1"/>
</dbReference>
<dbReference type="FunFam" id="3.10.100.10:FF:000002">
    <property type="entry name" value="Hyaluronan proteoglycan link protein 1"/>
    <property type="match status" value="1"/>
</dbReference>
<dbReference type="Gene3D" id="2.60.40.10">
    <property type="entry name" value="Immunoglobulins"/>
    <property type="match status" value="1"/>
</dbReference>
<dbReference type="Gene3D" id="3.10.100.10">
    <property type="entry name" value="Mannose-Binding Protein A, subunit A"/>
    <property type="match status" value="2"/>
</dbReference>
<dbReference type="InterPro" id="IPR016186">
    <property type="entry name" value="C-type_lectin-like/link_sf"/>
</dbReference>
<dbReference type="InterPro" id="IPR016187">
    <property type="entry name" value="CTDL_fold"/>
</dbReference>
<dbReference type="InterPro" id="IPR050691">
    <property type="entry name" value="Hyaluronan_bind_Proteoglycan"/>
</dbReference>
<dbReference type="InterPro" id="IPR007110">
    <property type="entry name" value="Ig-like_dom"/>
</dbReference>
<dbReference type="InterPro" id="IPR036179">
    <property type="entry name" value="Ig-like_dom_sf"/>
</dbReference>
<dbReference type="InterPro" id="IPR013783">
    <property type="entry name" value="Ig-like_fold"/>
</dbReference>
<dbReference type="InterPro" id="IPR003599">
    <property type="entry name" value="Ig_sub"/>
</dbReference>
<dbReference type="InterPro" id="IPR013106">
    <property type="entry name" value="Ig_V-set"/>
</dbReference>
<dbReference type="InterPro" id="IPR000538">
    <property type="entry name" value="Link_dom"/>
</dbReference>
<dbReference type="PANTHER" id="PTHR22804">
    <property type="entry name" value="AGGRECAN/VERSICAN PROTEOGLYCAN"/>
    <property type="match status" value="1"/>
</dbReference>
<dbReference type="PANTHER" id="PTHR22804:SF40">
    <property type="entry name" value="HYALURONAN AND PROTEOGLYCAN LINK PROTEIN 3"/>
    <property type="match status" value="1"/>
</dbReference>
<dbReference type="Pfam" id="PF07686">
    <property type="entry name" value="V-set"/>
    <property type="match status" value="1"/>
</dbReference>
<dbReference type="Pfam" id="PF00193">
    <property type="entry name" value="Xlink"/>
    <property type="match status" value="2"/>
</dbReference>
<dbReference type="PRINTS" id="PR01265">
    <property type="entry name" value="LINKMODULE"/>
</dbReference>
<dbReference type="SMART" id="SM00409">
    <property type="entry name" value="IG"/>
    <property type="match status" value="1"/>
</dbReference>
<dbReference type="SMART" id="SM00406">
    <property type="entry name" value="IGv"/>
    <property type="match status" value="1"/>
</dbReference>
<dbReference type="SMART" id="SM00445">
    <property type="entry name" value="LINK"/>
    <property type="match status" value="2"/>
</dbReference>
<dbReference type="SUPFAM" id="SSF56436">
    <property type="entry name" value="C-type lectin-like"/>
    <property type="match status" value="2"/>
</dbReference>
<dbReference type="SUPFAM" id="SSF48726">
    <property type="entry name" value="Immunoglobulin"/>
    <property type="match status" value="1"/>
</dbReference>
<dbReference type="PROSITE" id="PS50835">
    <property type="entry name" value="IG_LIKE"/>
    <property type="match status" value="1"/>
</dbReference>
<dbReference type="PROSITE" id="PS01241">
    <property type="entry name" value="LINK_1"/>
    <property type="match status" value="2"/>
</dbReference>
<dbReference type="PROSITE" id="PS50963">
    <property type="entry name" value="LINK_2"/>
    <property type="match status" value="2"/>
</dbReference>
<organism evidence="9">
    <name type="scientific">Homo sapiens</name>
    <name type="common">Human</name>
    <dbReference type="NCBI Taxonomy" id="9606"/>
    <lineage>
        <taxon>Eukaryota</taxon>
        <taxon>Metazoa</taxon>
        <taxon>Chordata</taxon>
        <taxon>Craniata</taxon>
        <taxon>Vertebrata</taxon>
        <taxon>Euteleostomi</taxon>
        <taxon>Mammalia</taxon>
        <taxon>Eutheria</taxon>
        <taxon>Euarchontoglires</taxon>
        <taxon>Primates</taxon>
        <taxon>Haplorrhini</taxon>
        <taxon>Catarrhini</taxon>
        <taxon>Hominidae</taxon>
        <taxon>Homo</taxon>
    </lineage>
</organism>